<protein>
    <recommendedName>
        <fullName evidence="1">Heat-inducible transcription repressor HrcA</fullName>
    </recommendedName>
</protein>
<sequence>MITQRQNDILNLIVELFTQTHEPVGSKALQRTIDSSSATIRNDMAKLEKLGLLEKAHTSSGRMPSPAGFKYFVEHSLRLDSIDEQDIYHVIKTFDFEAFKLEDMLQKASHILAEMTGYTSVILDVEPARQRLTGFDVVQLSNHDALAVMTLDESKPVTVQFAIPRNFLTRDLIAFKAIVEERLLDSSVIDIHYKLRTEIPQIVQKYFVTTDNVLQLFDYVFSELFLETVFVAGKVNSLTYSDLSTYQFLDNEQQVAISLRQSLKEGEMASVQVADSQEAALADVSVLTHKFLIPYRGFGLLSLIGPIDMDYRRSVSLVNIIGKVLAAKLGDYYRYLNSNHYEVH</sequence>
<keyword id="KW-0678">Repressor</keyword>
<keyword id="KW-0346">Stress response</keyword>
<keyword id="KW-0804">Transcription</keyword>
<keyword id="KW-0805">Transcription regulation</keyword>
<gene>
    <name evidence="1" type="primary">hrcA</name>
    <name type="ordered locus">M6_Spy1494</name>
</gene>
<accession>Q5XAD4</accession>
<organism>
    <name type="scientific">Streptococcus pyogenes serotype M6 (strain ATCC BAA-946 / MGAS10394)</name>
    <dbReference type="NCBI Taxonomy" id="286636"/>
    <lineage>
        <taxon>Bacteria</taxon>
        <taxon>Bacillati</taxon>
        <taxon>Bacillota</taxon>
        <taxon>Bacilli</taxon>
        <taxon>Lactobacillales</taxon>
        <taxon>Streptococcaceae</taxon>
        <taxon>Streptococcus</taxon>
    </lineage>
</organism>
<evidence type="ECO:0000255" key="1">
    <source>
        <dbReference type="HAMAP-Rule" id="MF_00081"/>
    </source>
</evidence>
<reference key="1">
    <citation type="journal article" date="2004" name="J. Infect. Dis.">
        <title>Progress toward characterization of the group A Streptococcus metagenome: complete genome sequence of a macrolide-resistant serotype M6 strain.</title>
        <authorList>
            <person name="Banks D.J."/>
            <person name="Porcella S.F."/>
            <person name="Barbian K.D."/>
            <person name="Beres S.B."/>
            <person name="Philips L.E."/>
            <person name="Voyich J.M."/>
            <person name="DeLeo F.R."/>
            <person name="Martin J.M."/>
            <person name="Somerville G.A."/>
            <person name="Musser J.M."/>
        </authorList>
    </citation>
    <scope>NUCLEOTIDE SEQUENCE [LARGE SCALE GENOMIC DNA]</scope>
    <source>
        <strain>ATCC BAA-946 / MGAS10394</strain>
    </source>
</reference>
<comment type="function">
    <text evidence="1">Negative regulator of class I heat shock genes (grpE-dnaK-dnaJ and groELS operons). Prevents heat-shock induction of these operons.</text>
</comment>
<comment type="similarity">
    <text evidence="1">Belongs to the HrcA family.</text>
</comment>
<name>HRCA_STRP6</name>
<dbReference type="EMBL" id="CP000003">
    <property type="protein sequence ID" value="AAT87629.1"/>
    <property type="molecule type" value="Genomic_DNA"/>
</dbReference>
<dbReference type="RefSeq" id="WP_002983310.1">
    <property type="nucleotide sequence ID" value="NC_006086.1"/>
</dbReference>
<dbReference type="SMR" id="Q5XAD4"/>
<dbReference type="GeneID" id="69900392"/>
<dbReference type="KEGG" id="spa:M6_Spy1494"/>
<dbReference type="HOGENOM" id="CLU_050019_1_0_9"/>
<dbReference type="Proteomes" id="UP000001167">
    <property type="component" value="Chromosome"/>
</dbReference>
<dbReference type="GO" id="GO:0003677">
    <property type="term" value="F:DNA binding"/>
    <property type="evidence" value="ECO:0007669"/>
    <property type="project" value="InterPro"/>
</dbReference>
<dbReference type="GO" id="GO:0045892">
    <property type="term" value="P:negative regulation of DNA-templated transcription"/>
    <property type="evidence" value="ECO:0007669"/>
    <property type="project" value="UniProtKB-UniRule"/>
</dbReference>
<dbReference type="Gene3D" id="3.30.450.40">
    <property type="match status" value="1"/>
</dbReference>
<dbReference type="Gene3D" id="3.30.390.60">
    <property type="entry name" value="Heat-inducible transcription repressor hrca homolog, domain 3"/>
    <property type="match status" value="1"/>
</dbReference>
<dbReference type="Gene3D" id="1.10.10.10">
    <property type="entry name" value="Winged helix-like DNA-binding domain superfamily/Winged helix DNA-binding domain"/>
    <property type="match status" value="1"/>
</dbReference>
<dbReference type="HAMAP" id="MF_00081">
    <property type="entry name" value="HrcA"/>
    <property type="match status" value="1"/>
</dbReference>
<dbReference type="InterPro" id="IPR029016">
    <property type="entry name" value="GAF-like_dom_sf"/>
</dbReference>
<dbReference type="InterPro" id="IPR002571">
    <property type="entry name" value="HrcA"/>
</dbReference>
<dbReference type="InterPro" id="IPR021153">
    <property type="entry name" value="HrcA_C"/>
</dbReference>
<dbReference type="InterPro" id="IPR036388">
    <property type="entry name" value="WH-like_DNA-bd_sf"/>
</dbReference>
<dbReference type="InterPro" id="IPR036390">
    <property type="entry name" value="WH_DNA-bd_sf"/>
</dbReference>
<dbReference type="InterPro" id="IPR005104">
    <property type="entry name" value="WHTH_HrcA_DNA-bd"/>
</dbReference>
<dbReference type="InterPro" id="IPR023120">
    <property type="entry name" value="WHTH_transcript_rep_HrcA_IDD"/>
</dbReference>
<dbReference type="NCBIfam" id="TIGR00331">
    <property type="entry name" value="hrcA"/>
    <property type="match status" value="1"/>
</dbReference>
<dbReference type="PANTHER" id="PTHR34824">
    <property type="entry name" value="HEAT-INDUCIBLE TRANSCRIPTION REPRESSOR HRCA"/>
    <property type="match status" value="1"/>
</dbReference>
<dbReference type="PANTHER" id="PTHR34824:SF1">
    <property type="entry name" value="HEAT-INDUCIBLE TRANSCRIPTION REPRESSOR HRCA"/>
    <property type="match status" value="1"/>
</dbReference>
<dbReference type="Pfam" id="PF01628">
    <property type="entry name" value="HrcA"/>
    <property type="match status" value="1"/>
</dbReference>
<dbReference type="Pfam" id="PF03444">
    <property type="entry name" value="HrcA_DNA-bdg"/>
    <property type="match status" value="1"/>
</dbReference>
<dbReference type="PIRSF" id="PIRSF005485">
    <property type="entry name" value="HrcA"/>
    <property type="match status" value="1"/>
</dbReference>
<dbReference type="SUPFAM" id="SSF55781">
    <property type="entry name" value="GAF domain-like"/>
    <property type="match status" value="1"/>
</dbReference>
<dbReference type="SUPFAM" id="SSF46785">
    <property type="entry name" value="Winged helix' DNA-binding domain"/>
    <property type="match status" value="1"/>
</dbReference>
<proteinExistence type="inferred from homology"/>
<feature type="chain" id="PRO_0000182544" description="Heat-inducible transcription repressor HrcA">
    <location>
        <begin position="1"/>
        <end position="344"/>
    </location>
</feature>